<proteinExistence type="inferred from homology"/>
<name>HRCA_BORBR</name>
<keyword id="KW-0678">Repressor</keyword>
<keyword id="KW-0346">Stress response</keyword>
<keyword id="KW-0804">Transcription</keyword>
<keyword id="KW-0805">Transcription regulation</keyword>
<accession>Q7WGH9</accession>
<sequence>MDDRARALLKALIERYIADGQPVGSRTLSKVFDLSPATIRNVMADLEELGLIHSPHTSAGRVPTPRGYRMFVDSLLAVRAYQFEPAHIGELLPVSEPSRAVNAAAALLSNLTQFAGVVLTPKRTQIFRQIEFIRLSDKRVLLIIVTPEGDVQNRILSAQRDYTEAELLEAGNFFNVHFSGKSFDAVRRTLSTELAQLRDDISRLMQAAVEAGAEAADDGEAVVISGERKLLDVTDIASDMDRLRKMFSLFEKKTDLLQLLDVSSRAQGVQIYIGGDSQLVPMEEVSVITAPYGVDGKVIGTLGVIGPTRMAYERVIPIVDITARLLSNALSHNQ</sequence>
<comment type="function">
    <text evidence="1">Negative regulator of class I heat shock genes (grpE-dnaK-dnaJ and groELS operons). Prevents heat-shock induction of these operons.</text>
</comment>
<comment type="similarity">
    <text evidence="1">Belongs to the HrcA family.</text>
</comment>
<feature type="chain" id="PRO_0000182454" description="Heat-inducible transcription repressor HrcA">
    <location>
        <begin position="1"/>
        <end position="334"/>
    </location>
</feature>
<reference key="1">
    <citation type="journal article" date="2003" name="Nat. Genet.">
        <title>Comparative analysis of the genome sequences of Bordetella pertussis, Bordetella parapertussis and Bordetella bronchiseptica.</title>
        <authorList>
            <person name="Parkhill J."/>
            <person name="Sebaihia M."/>
            <person name="Preston A."/>
            <person name="Murphy L.D."/>
            <person name="Thomson N.R."/>
            <person name="Harris D.E."/>
            <person name="Holden M.T.G."/>
            <person name="Churcher C.M."/>
            <person name="Bentley S.D."/>
            <person name="Mungall K.L."/>
            <person name="Cerdeno-Tarraga A.-M."/>
            <person name="Temple L."/>
            <person name="James K.D."/>
            <person name="Harris B."/>
            <person name="Quail M.A."/>
            <person name="Achtman M."/>
            <person name="Atkin R."/>
            <person name="Baker S."/>
            <person name="Basham D."/>
            <person name="Bason N."/>
            <person name="Cherevach I."/>
            <person name="Chillingworth T."/>
            <person name="Collins M."/>
            <person name="Cronin A."/>
            <person name="Davis P."/>
            <person name="Doggett J."/>
            <person name="Feltwell T."/>
            <person name="Goble A."/>
            <person name="Hamlin N."/>
            <person name="Hauser H."/>
            <person name="Holroyd S."/>
            <person name="Jagels K."/>
            <person name="Leather S."/>
            <person name="Moule S."/>
            <person name="Norberczak H."/>
            <person name="O'Neil S."/>
            <person name="Ormond D."/>
            <person name="Price C."/>
            <person name="Rabbinowitsch E."/>
            <person name="Rutter S."/>
            <person name="Sanders M."/>
            <person name="Saunders D."/>
            <person name="Seeger K."/>
            <person name="Sharp S."/>
            <person name="Simmonds M."/>
            <person name="Skelton J."/>
            <person name="Squares R."/>
            <person name="Squares S."/>
            <person name="Stevens K."/>
            <person name="Unwin L."/>
            <person name="Whitehead S."/>
            <person name="Barrell B.G."/>
            <person name="Maskell D.J."/>
        </authorList>
    </citation>
    <scope>NUCLEOTIDE SEQUENCE [LARGE SCALE GENOMIC DNA]</scope>
    <source>
        <strain>ATCC BAA-588 / NCTC 13252 / RB50</strain>
    </source>
</reference>
<gene>
    <name evidence="1" type="primary">hrcA</name>
    <name type="ordered locus">BB3939</name>
</gene>
<evidence type="ECO:0000255" key="1">
    <source>
        <dbReference type="HAMAP-Rule" id="MF_00081"/>
    </source>
</evidence>
<organism>
    <name type="scientific">Bordetella bronchiseptica (strain ATCC BAA-588 / NCTC 13252 / RB50)</name>
    <name type="common">Alcaligenes bronchisepticus</name>
    <dbReference type="NCBI Taxonomy" id="257310"/>
    <lineage>
        <taxon>Bacteria</taxon>
        <taxon>Pseudomonadati</taxon>
        <taxon>Pseudomonadota</taxon>
        <taxon>Betaproteobacteria</taxon>
        <taxon>Burkholderiales</taxon>
        <taxon>Alcaligenaceae</taxon>
        <taxon>Bordetella</taxon>
    </lineage>
</organism>
<dbReference type="EMBL" id="BX640449">
    <property type="protein sequence ID" value="CAE34302.1"/>
    <property type="molecule type" value="Genomic_DNA"/>
</dbReference>
<dbReference type="RefSeq" id="WP_003814090.1">
    <property type="nucleotide sequence ID" value="NC_002927.3"/>
</dbReference>
<dbReference type="SMR" id="Q7WGH9"/>
<dbReference type="DNASU" id="2661350"/>
<dbReference type="GeneID" id="93205276"/>
<dbReference type="KEGG" id="bbr:BB3939"/>
<dbReference type="eggNOG" id="COG1420">
    <property type="taxonomic scope" value="Bacteria"/>
</dbReference>
<dbReference type="HOGENOM" id="CLU_050019_0_0_4"/>
<dbReference type="Proteomes" id="UP000001027">
    <property type="component" value="Chromosome"/>
</dbReference>
<dbReference type="GO" id="GO:0003677">
    <property type="term" value="F:DNA binding"/>
    <property type="evidence" value="ECO:0007669"/>
    <property type="project" value="InterPro"/>
</dbReference>
<dbReference type="GO" id="GO:0045892">
    <property type="term" value="P:negative regulation of DNA-templated transcription"/>
    <property type="evidence" value="ECO:0007669"/>
    <property type="project" value="UniProtKB-UniRule"/>
</dbReference>
<dbReference type="Gene3D" id="3.30.450.40">
    <property type="match status" value="1"/>
</dbReference>
<dbReference type="Gene3D" id="3.30.390.60">
    <property type="entry name" value="Heat-inducible transcription repressor hrca homolog, domain 3"/>
    <property type="match status" value="1"/>
</dbReference>
<dbReference type="Gene3D" id="1.10.10.10">
    <property type="entry name" value="Winged helix-like DNA-binding domain superfamily/Winged helix DNA-binding domain"/>
    <property type="match status" value="1"/>
</dbReference>
<dbReference type="HAMAP" id="MF_00081">
    <property type="entry name" value="HrcA"/>
    <property type="match status" value="1"/>
</dbReference>
<dbReference type="InterPro" id="IPR029016">
    <property type="entry name" value="GAF-like_dom_sf"/>
</dbReference>
<dbReference type="InterPro" id="IPR002571">
    <property type="entry name" value="HrcA"/>
</dbReference>
<dbReference type="InterPro" id="IPR021153">
    <property type="entry name" value="HrcA_C"/>
</dbReference>
<dbReference type="InterPro" id="IPR036388">
    <property type="entry name" value="WH-like_DNA-bd_sf"/>
</dbReference>
<dbReference type="InterPro" id="IPR036390">
    <property type="entry name" value="WH_DNA-bd_sf"/>
</dbReference>
<dbReference type="InterPro" id="IPR005104">
    <property type="entry name" value="WHTH_HrcA_DNA-bd"/>
</dbReference>
<dbReference type="InterPro" id="IPR023120">
    <property type="entry name" value="WHTH_transcript_rep_HrcA_IDD"/>
</dbReference>
<dbReference type="NCBIfam" id="TIGR00331">
    <property type="entry name" value="hrcA"/>
    <property type="match status" value="1"/>
</dbReference>
<dbReference type="PANTHER" id="PTHR34824">
    <property type="entry name" value="HEAT-INDUCIBLE TRANSCRIPTION REPRESSOR HRCA"/>
    <property type="match status" value="1"/>
</dbReference>
<dbReference type="PANTHER" id="PTHR34824:SF1">
    <property type="entry name" value="HEAT-INDUCIBLE TRANSCRIPTION REPRESSOR HRCA"/>
    <property type="match status" value="1"/>
</dbReference>
<dbReference type="Pfam" id="PF01628">
    <property type="entry name" value="HrcA"/>
    <property type="match status" value="1"/>
</dbReference>
<dbReference type="Pfam" id="PF03444">
    <property type="entry name" value="HrcA_DNA-bdg"/>
    <property type="match status" value="1"/>
</dbReference>
<dbReference type="PIRSF" id="PIRSF005485">
    <property type="entry name" value="HrcA"/>
    <property type="match status" value="1"/>
</dbReference>
<dbReference type="SUPFAM" id="SSF55781">
    <property type="entry name" value="GAF domain-like"/>
    <property type="match status" value="1"/>
</dbReference>
<dbReference type="SUPFAM" id="SSF46785">
    <property type="entry name" value="Winged helix' DNA-binding domain"/>
    <property type="match status" value="1"/>
</dbReference>
<protein>
    <recommendedName>
        <fullName evidence="1">Heat-inducible transcription repressor HrcA</fullName>
    </recommendedName>
</protein>